<name>IF2_LISMF</name>
<dbReference type="EMBL" id="AE017262">
    <property type="protein sequence ID" value="AAT04117.1"/>
    <property type="molecule type" value="Genomic_DNA"/>
</dbReference>
<dbReference type="RefSeq" id="WP_003727494.1">
    <property type="nucleotide sequence ID" value="NC_002973.6"/>
</dbReference>
<dbReference type="SMR" id="Q71ZZ7"/>
<dbReference type="KEGG" id="lmf:LMOf2365_1342"/>
<dbReference type="HOGENOM" id="CLU_006301_5_1_9"/>
<dbReference type="GO" id="GO:0005829">
    <property type="term" value="C:cytosol"/>
    <property type="evidence" value="ECO:0007669"/>
    <property type="project" value="TreeGrafter"/>
</dbReference>
<dbReference type="GO" id="GO:0005525">
    <property type="term" value="F:GTP binding"/>
    <property type="evidence" value="ECO:0007669"/>
    <property type="project" value="UniProtKB-KW"/>
</dbReference>
<dbReference type="GO" id="GO:0003924">
    <property type="term" value="F:GTPase activity"/>
    <property type="evidence" value="ECO:0007669"/>
    <property type="project" value="UniProtKB-UniRule"/>
</dbReference>
<dbReference type="GO" id="GO:0003743">
    <property type="term" value="F:translation initiation factor activity"/>
    <property type="evidence" value="ECO:0007669"/>
    <property type="project" value="UniProtKB-UniRule"/>
</dbReference>
<dbReference type="CDD" id="cd01887">
    <property type="entry name" value="IF2_eIF5B"/>
    <property type="match status" value="1"/>
</dbReference>
<dbReference type="CDD" id="cd03702">
    <property type="entry name" value="IF2_mtIF2_II"/>
    <property type="match status" value="1"/>
</dbReference>
<dbReference type="CDD" id="cd03692">
    <property type="entry name" value="mtIF2_IVc"/>
    <property type="match status" value="1"/>
</dbReference>
<dbReference type="FunFam" id="2.40.30.10:FF:000007">
    <property type="entry name" value="Translation initiation factor IF-2"/>
    <property type="match status" value="1"/>
</dbReference>
<dbReference type="FunFam" id="2.40.30.10:FF:000008">
    <property type="entry name" value="Translation initiation factor IF-2"/>
    <property type="match status" value="1"/>
</dbReference>
<dbReference type="FunFam" id="3.40.50.10050:FF:000001">
    <property type="entry name" value="Translation initiation factor IF-2"/>
    <property type="match status" value="1"/>
</dbReference>
<dbReference type="FunFam" id="3.40.50.300:FF:000019">
    <property type="entry name" value="Translation initiation factor IF-2"/>
    <property type="match status" value="1"/>
</dbReference>
<dbReference type="Gene3D" id="1.10.10.2480">
    <property type="match status" value="1"/>
</dbReference>
<dbReference type="Gene3D" id="3.40.50.300">
    <property type="entry name" value="P-loop containing nucleotide triphosphate hydrolases"/>
    <property type="match status" value="1"/>
</dbReference>
<dbReference type="Gene3D" id="2.40.30.10">
    <property type="entry name" value="Translation factors"/>
    <property type="match status" value="2"/>
</dbReference>
<dbReference type="Gene3D" id="3.40.50.10050">
    <property type="entry name" value="Translation initiation factor IF- 2, domain 3"/>
    <property type="match status" value="1"/>
</dbReference>
<dbReference type="HAMAP" id="MF_00100_B">
    <property type="entry name" value="IF_2_B"/>
    <property type="match status" value="1"/>
</dbReference>
<dbReference type="InterPro" id="IPR053905">
    <property type="entry name" value="EF-G-like_DII"/>
</dbReference>
<dbReference type="InterPro" id="IPR044145">
    <property type="entry name" value="IF2_II"/>
</dbReference>
<dbReference type="InterPro" id="IPR006847">
    <property type="entry name" value="IF2_N"/>
</dbReference>
<dbReference type="InterPro" id="IPR027417">
    <property type="entry name" value="P-loop_NTPase"/>
</dbReference>
<dbReference type="InterPro" id="IPR005225">
    <property type="entry name" value="Small_GTP-bd"/>
</dbReference>
<dbReference type="InterPro" id="IPR000795">
    <property type="entry name" value="T_Tr_GTP-bd_dom"/>
</dbReference>
<dbReference type="InterPro" id="IPR000178">
    <property type="entry name" value="TF_IF2_bacterial-like"/>
</dbReference>
<dbReference type="InterPro" id="IPR015760">
    <property type="entry name" value="TIF_IF2"/>
</dbReference>
<dbReference type="InterPro" id="IPR023115">
    <property type="entry name" value="TIF_IF2_dom3"/>
</dbReference>
<dbReference type="InterPro" id="IPR036925">
    <property type="entry name" value="TIF_IF2_dom3_sf"/>
</dbReference>
<dbReference type="InterPro" id="IPR009000">
    <property type="entry name" value="Transl_B-barrel_sf"/>
</dbReference>
<dbReference type="NCBIfam" id="TIGR00487">
    <property type="entry name" value="IF-2"/>
    <property type="match status" value="1"/>
</dbReference>
<dbReference type="NCBIfam" id="TIGR00231">
    <property type="entry name" value="small_GTP"/>
    <property type="match status" value="1"/>
</dbReference>
<dbReference type="PANTHER" id="PTHR43381:SF5">
    <property type="entry name" value="TR-TYPE G DOMAIN-CONTAINING PROTEIN"/>
    <property type="match status" value="1"/>
</dbReference>
<dbReference type="PANTHER" id="PTHR43381">
    <property type="entry name" value="TRANSLATION INITIATION FACTOR IF-2-RELATED"/>
    <property type="match status" value="1"/>
</dbReference>
<dbReference type="Pfam" id="PF22042">
    <property type="entry name" value="EF-G_D2"/>
    <property type="match status" value="1"/>
</dbReference>
<dbReference type="Pfam" id="PF00009">
    <property type="entry name" value="GTP_EFTU"/>
    <property type="match status" value="1"/>
</dbReference>
<dbReference type="Pfam" id="PF11987">
    <property type="entry name" value="IF-2"/>
    <property type="match status" value="1"/>
</dbReference>
<dbReference type="Pfam" id="PF04760">
    <property type="entry name" value="IF2_N"/>
    <property type="match status" value="2"/>
</dbReference>
<dbReference type="SUPFAM" id="SSF52156">
    <property type="entry name" value="Initiation factor IF2/eIF5b, domain 3"/>
    <property type="match status" value="1"/>
</dbReference>
<dbReference type="SUPFAM" id="SSF52540">
    <property type="entry name" value="P-loop containing nucleoside triphosphate hydrolases"/>
    <property type="match status" value="1"/>
</dbReference>
<dbReference type="SUPFAM" id="SSF50447">
    <property type="entry name" value="Translation proteins"/>
    <property type="match status" value="2"/>
</dbReference>
<dbReference type="PROSITE" id="PS51722">
    <property type="entry name" value="G_TR_2"/>
    <property type="match status" value="1"/>
</dbReference>
<dbReference type="PROSITE" id="PS01176">
    <property type="entry name" value="IF2"/>
    <property type="match status" value="1"/>
</dbReference>
<accession>Q71ZZ7</accession>
<proteinExistence type="inferred from homology"/>
<sequence>MSKVRVYEYAKEHQVSSKKVIEALKDLGIEVANHMSTINENALRQLDNAIDGTNKKAEAPKKETTSNENGNSKGPNKPNMTNSNEKSNKPNNPAGQANKPATANKSQGAKPATNKPANTSKQTQSSGNQQQAGGQKRNNNNNSNRPGGGNPNRPGGNNRPNRGGNFNNKGRNTKKKGKLNHSTVPPTPPKPKELPEKIVFSESLTVAELAKKLYREPSELIKKLFMLGVVATINQSLDKDAIELICDDYGVQVEEEIKVDVTDLDVYFENELNEAVDESKLVERPPVVTIMGHVDHGKTTLLDSLRNTKVTLGEAGGITQHIGAYQLEIHDKKITFLDTPGHAAFTAMRARGAQITDITILVVAADDGVMPQTIEAINHAKAAGMPIIVAVNKIDKPQANPDRVMQELTEYELVPEAWGGDTIFAPISAKFGEGLENLLDMILLVSEVEELKANPDRRAIGSVIEAELDKGRGPVATLLVQDGTLNIGDPIVVGNTFGRVRAMVNDLGRRVKKVGPSTPVEITGLNDVPQAGDRFVVFEDEKTARNIGETRASRALVAQRSATNRVSLDNLFEHMKAGEMKEVNVIIKADVQGSVEALAASLRKIDVEGVNVKIIHTAVGAINESDITLAAASNAIVIGFNVRPTAQAREAAENESVDIRLHRVIYKAIDEIEAAMKGMLDPEFQEKIIGQAQVRQTINVSKVGTIAGCYVTDGKITRDSGVRIIRDGIVVFEGEIATLKRFKDDAKEVAKGYECGITVQNFNDIKEDDVIEAYVMEEIERK</sequence>
<protein>
    <recommendedName>
        <fullName evidence="2">Translation initiation factor IF-2</fullName>
    </recommendedName>
</protein>
<comment type="function">
    <text evidence="2">One of the essential components for the initiation of protein synthesis. Protects formylmethionyl-tRNA from spontaneous hydrolysis and promotes its binding to the 30S ribosomal subunits. Also involved in the hydrolysis of GTP during the formation of the 70S ribosomal complex.</text>
</comment>
<comment type="subcellular location">
    <subcellularLocation>
        <location evidence="2">Cytoplasm</location>
    </subcellularLocation>
</comment>
<comment type="similarity">
    <text evidence="2">Belongs to the TRAFAC class translation factor GTPase superfamily. Classic translation factor GTPase family. IF-2 subfamily.</text>
</comment>
<feature type="chain" id="PRO_0000137218" description="Translation initiation factor IF-2">
    <location>
        <begin position="1"/>
        <end position="782"/>
    </location>
</feature>
<feature type="domain" description="tr-type G">
    <location>
        <begin position="283"/>
        <end position="452"/>
    </location>
</feature>
<feature type="region of interest" description="Disordered" evidence="3">
    <location>
        <begin position="47"/>
        <end position="196"/>
    </location>
</feature>
<feature type="region of interest" description="G1" evidence="1">
    <location>
        <begin position="292"/>
        <end position="299"/>
    </location>
</feature>
<feature type="region of interest" description="G2" evidence="1">
    <location>
        <begin position="317"/>
        <end position="321"/>
    </location>
</feature>
<feature type="region of interest" description="G3" evidence="1">
    <location>
        <begin position="338"/>
        <end position="341"/>
    </location>
</feature>
<feature type="region of interest" description="G4" evidence="1">
    <location>
        <begin position="392"/>
        <end position="395"/>
    </location>
</feature>
<feature type="region of interest" description="G5" evidence="1">
    <location>
        <begin position="428"/>
        <end position="430"/>
    </location>
</feature>
<feature type="compositionally biased region" description="Basic and acidic residues" evidence="3">
    <location>
        <begin position="53"/>
        <end position="65"/>
    </location>
</feature>
<feature type="compositionally biased region" description="Polar residues" evidence="3">
    <location>
        <begin position="66"/>
        <end position="81"/>
    </location>
</feature>
<feature type="compositionally biased region" description="Low complexity" evidence="3">
    <location>
        <begin position="82"/>
        <end position="93"/>
    </location>
</feature>
<feature type="compositionally biased region" description="Low complexity" evidence="3">
    <location>
        <begin position="118"/>
        <end position="170"/>
    </location>
</feature>
<feature type="binding site" evidence="2">
    <location>
        <begin position="292"/>
        <end position="299"/>
    </location>
    <ligand>
        <name>GTP</name>
        <dbReference type="ChEBI" id="CHEBI:37565"/>
    </ligand>
</feature>
<feature type="binding site" evidence="2">
    <location>
        <begin position="338"/>
        <end position="342"/>
    </location>
    <ligand>
        <name>GTP</name>
        <dbReference type="ChEBI" id="CHEBI:37565"/>
    </ligand>
</feature>
<feature type="binding site" evidence="2">
    <location>
        <begin position="392"/>
        <end position="395"/>
    </location>
    <ligand>
        <name>GTP</name>
        <dbReference type="ChEBI" id="CHEBI:37565"/>
    </ligand>
</feature>
<evidence type="ECO:0000250" key="1"/>
<evidence type="ECO:0000255" key="2">
    <source>
        <dbReference type="HAMAP-Rule" id="MF_00100"/>
    </source>
</evidence>
<evidence type="ECO:0000256" key="3">
    <source>
        <dbReference type="SAM" id="MobiDB-lite"/>
    </source>
</evidence>
<organism>
    <name type="scientific">Listeria monocytogenes serotype 4b (strain F2365)</name>
    <dbReference type="NCBI Taxonomy" id="265669"/>
    <lineage>
        <taxon>Bacteria</taxon>
        <taxon>Bacillati</taxon>
        <taxon>Bacillota</taxon>
        <taxon>Bacilli</taxon>
        <taxon>Bacillales</taxon>
        <taxon>Listeriaceae</taxon>
        <taxon>Listeria</taxon>
    </lineage>
</organism>
<keyword id="KW-0963">Cytoplasm</keyword>
<keyword id="KW-0342">GTP-binding</keyword>
<keyword id="KW-0396">Initiation factor</keyword>
<keyword id="KW-0547">Nucleotide-binding</keyword>
<keyword id="KW-0648">Protein biosynthesis</keyword>
<gene>
    <name evidence="2" type="primary">infB</name>
    <name type="ordered locus">LMOf2365_1342</name>
</gene>
<reference key="1">
    <citation type="journal article" date="2004" name="Nucleic Acids Res.">
        <title>Whole genome comparisons of serotype 4b and 1/2a strains of the food-borne pathogen Listeria monocytogenes reveal new insights into the core genome components of this species.</title>
        <authorList>
            <person name="Nelson K.E."/>
            <person name="Fouts D.E."/>
            <person name="Mongodin E.F."/>
            <person name="Ravel J."/>
            <person name="DeBoy R.T."/>
            <person name="Kolonay J.F."/>
            <person name="Rasko D.A."/>
            <person name="Angiuoli S.V."/>
            <person name="Gill S.R."/>
            <person name="Paulsen I.T."/>
            <person name="Peterson J.D."/>
            <person name="White O."/>
            <person name="Nelson W.C."/>
            <person name="Nierman W.C."/>
            <person name="Beanan M.J."/>
            <person name="Brinkac L.M."/>
            <person name="Daugherty S.C."/>
            <person name="Dodson R.J."/>
            <person name="Durkin A.S."/>
            <person name="Madupu R."/>
            <person name="Haft D.H."/>
            <person name="Selengut J."/>
            <person name="Van Aken S.E."/>
            <person name="Khouri H.M."/>
            <person name="Fedorova N."/>
            <person name="Forberger H.A."/>
            <person name="Tran B."/>
            <person name="Kathariou S."/>
            <person name="Wonderling L.D."/>
            <person name="Uhlich G.A."/>
            <person name="Bayles D.O."/>
            <person name="Luchansky J.B."/>
            <person name="Fraser C.M."/>
        </authorList>
    </citation>
    <scope>NUCLEOTIDE SEQUENCE [LARGE SCALE GENOMIC DNA]</scope>
    <source>
        <strain>F2365</strain>
    </source>
</reference>